<sequence length="255" mass="28944">MLLALGPKAWPKLSQFKPLLRISGGETLHRNSRHWAGQGQRQGPGLRTRLLITALFGAGLGWAWLAARAEKEQWRQQQRTEALRQAAVGQGDFSLLDHKGQPRCKADFRGQWVLMYFGFTHCPDICPDELEKLVQVVRKLEAEPDLPLVQPVFITVDPERDDVAAMARYVQEFHPRLLGLTGSTEQVAHASRNYRVYYSAGPKDEDQDYIVDHSIAIYLLNPDGLFTDYYGRSRSAEQIVESIRRHIAAFHSVLP</sequence>
<name>SCO2_MOUSE</name>
<keyword id="KW-0143">Chaperone</keyword>
<keyword id="KW-0186">Copper</keyword>
<keyword id="KW-1015">Disulfide bond</keyword>
<keyword id="KW-0472">Membrane</keyword>
<keyword id="KW-0479">Metal-binding</keyword>
<keyword id="KW-0496">Mitochondrion</keyword>
<keyword id="KW-0999">Mitochondrion inner membrane</keyword>
<keyword id="KW-1185">Reference proteome</keyword>
<keyword id="KW-0809">Transit peptide</keyword>
<keyword id="KW-0812">Transmembrane</keyword>
<keyword id="KW-1133">Transmembrane helix</keyword>
<comment type="function">
    <text evidence="1">Copper metallochaperone essential for the synthesis and maturation of cytochrome c oxidase subunit II (MT-CO2/COX2) by facilitating the incorporation of copper into the Cu(A) site of MT-CO2/COX2. Could also act as a thiol-disulfide oxidoreductase to regulate the redox state of the cysteines in SCO1 during maturation of MT-CO2/COX2.</text>
</comment>
<comment type="subunit">
    <text evidence="1">Homodimer. Interacts with COA6. Found in a complex with TMEM177, COX20, COA6, MT-CO2/COX2, COX18 and SCO1. Interacts with TMEM177 in a COX20-dependent manner. Interacts with COX20 in a MT-CO2/COX2- and COX18-dependent manner. Interacts with COX16.</text>
</comment>
<comment type="subcellular location">
    <subcellularLocation>
        <location evidence="1">Mitochondrion inner membrane</location>
        <topology evidence="2">Single-pass membrane protein</topology>
    </subcellularLocation>
</comment>
<comment type="tissue specificity">
    <text evidence="4">Expressed in retina, retinal pigment epithelium, and sclera.</text>
</comment>
<comment type="similarity">
    <text evidence="5">Belongs to the SCO1/2 family.</text>
</comment>
<reference key="1">
    <citation type="journal article" date="2004" name="Genome Res.">
        <title>The status, quality, and expansion of the NIH full-length cDNA project: the Mammalian Gene Collection (MGC).</title>
        <authorList>
            <consortium name="The MGC Project Team"/>
        </authorList>
    </citation>
    <scope>NUCLEOTIDE SEQUENCE [LARGE SCALE MRNA]</scope>
    <source>
        <strain>FVB/N</strain>
        <tissue>Liver</tissue>
    </source>
</reference>
<reference key="2">
    <citation type="journal article" date="2010" name="Cell">
        <title>A tissue-specific atlas of mouse protein phosphorylation and expression.</title>
        <authorList>
            <person name="Huttlin E.L."/>
            <person name="Jedrychowski M.P."/>
            <person name="Elias J.E."/>
            <person name="Goswami T."/>
            <person name="Rad R."/>
            <person name="Beausoleil S.A."/>
            <person name="Villen J."/>
            <person name="Haas W."/>
            <person name="Sowa M.E."/>
            <person name="Gygi S.P."/>
        </authorList>
    </citation>
    <scope>IDENTIFICATION BY MASS SPECTROMETRY [LARGE SCALE ANALYSIS]</scope>
    <source>
        <tissue>Brown adipose tissue</tissue>
        <tissue>Heart</tissue>
        <tissue>Kidney</tissue>
        <tissue>Liver</tissue>
    </source>
</reference>
<reference key="3">
    <citation type="journal article" date="2013" name="Am. J. Hum. Genet.">
        <title>Mutations in SCO2 are associated with autosomal-dominant high-grade myopia.</title>
        <authorList>
            <person name="Tran-Viet K.N."/>
            <person name="Powell C."/>
            <person name="Barathi V.A."/>
            <person name="Klemm T."/>
            <person name="Maurer-Stroh S."/>
            <person name="Limviphuvadh V."/>
            <person name="Soler V."/>
            <person name="Ho C."/>
            <person name="Yanovitch T."/>
            <person name="Schneider G."/>
            <person name="Li Y.J."/>
            <person name="Nading E."/>
            <person name="Metlapally R."/>
            <person name="Saw S.M."/>
            <person name="Goh L."/>
            <person name="Rozen S."/>
            <person name="Young T.L."/>
        </authorList>
    </citation>
    <scope>TISSUE SPECIFICITY</scope>
</reference>
<proteinExistence type="evidence at protein level"/>
<evidence type="ECO:0000250" key="1">
    <source>
        <dbReference type="UniProtKB" id="O43819"/>
    </source>
</evidence>
<evidence type="ECO:0000255" key="2"/>
<evidence type="ECO:0000255" key="3">
    <source>
        <dbReference type="PROSITE-ProRule" id="PRU00691"/>
    </source>
</evidence>
<evidence type="ECO:0000269" key="4">
    <source>
    </source>
</evidence>
<evidence type="ECO:0000305" key="5"/>
<feature type="transit peptide" description="Mitochondrion" evidence="2">
    <location>
        <begin position="1"/>
        <end position="41"/>
    </location>
</feature>
<feature type="chain" id="PRO_0000354068" description="Protein SCO2 homolog, mitochondrial">
    <location>
        <begin position="42"/>
        <end position="255"/>
    </location>
</feature>
<feature type="topological domain" description="Mitochondrial matrix" evidence="1">
    <location>
        <begin position="42"/>
        <end position="49"/>
    </location>
</feature>
<feature type="transmembrane region" description="Helical" evidence="2">
    <location>
        <begin position="50"/>
        <end position="67"/>
    </location>
</feature>
<feature type="topological domain" description="Mitochondrial intermembrane" evidence="1">
    <location>
        <begin position="68"/>
        <end position="255"/>
    </location>
</feature>
<feature type="domain" description="Thioredoxin" evidence="3">
    <location>
        <begin position="74"/>
        <end position="248"/>
    </location>
</feature>
<feature type="binding site" evidence="1">
    <location>
        <position position="122"/>
    </location>
    <ligand>
        <name>Cu cation</name>
        <dbReference type="ChEBI" id="CHEBI:23378"/>
    </ligand>
</feature>
<feature type="binding site" evidence="1">
    <location>
        <position position="126"/>
    </location>
    <ligand>
        <name>Cu cation</name>
        <dbReference type="ChEBI" id="CHEBI:23378"/>
    </ligand>
</feature>
<feature type="binding site" evidence="1">
    <location>
        <position position="213"/>
    </location>
    <ligand>
        <name>Cu cation</name>
        <dbReference type="ChEBI" id="CHEBI:23378"/>
    </ligand>
</feature>
<feature type="disulfide bond" description="Redox-active" evidence="3">
    <location>
        <begin position="122"/>
        <end position="126"/>
    </location>
</feature>
<dbReference type="EMBL" id="BC019554">
    <property type="protein sequence ID" value="AAH19554.1"/>
    <property type="molecule type" value="mRNA"/>
</dbReference>
<dbReference type="CCDS" id="CCDS49701.1"/>
<dbReference type="RefSeq" id="NP_001104758.1">
    <property type="nucleotide sequence ID" value="NM_001111288.2"/>
</dbReference>
<dbReference type="SMR" id="Q8VCL2"/>
<dbReference type="BioGRID" id="792533">
    <property type="interactions" value="2"/>
</dbReference>
<dbReference type="FunCoup" id="Q8VCL2">
    <property type="interactions" value="580"/>
</dbReference>
<dbReference type="STRING" id="10090.ENSMUSP00000155150"/>
<dbReference type="PhosphoSitePlus" id="Q8VCL2"/>
<dbReference type="SwissPalm" id="Q8VCL2"/>
<dbReference type="jPOST" id="Q8VCL2"/>
<dbReference type="PaxDb" id="10090-ENSMUSP00000131943"/>
<dbReference type="PeptideAtlas" id="Q8VCL2"/>
<dbReference type="ProteomicsDB" id="255365"/>
<dbReference type="Pumba" id="Q8VCL2"/>
<dbReference type="Antibodypedia" id="78977">
    <property type="antibodies" value="167 antibodies from 31 providers"/>
</dbReference>
<dbReference type="Ensembl" id="ENSMUST00000167643.4">
    <property type="protein sequence ID" value="ENSMUSP00000131943.3"/>
    <property type="gene ID" value="ENSMUSG00000091780.4"/>
</dbReference>
<dbReference type="Ensembl" id="ENSMUST00000228977.2">
    <property type="protein sequence ID" value="ENSMUSP00000155150.2"/>
    <property type="gene ID" value="ENSMUSG00000091780.4"/>
</dbReference>
<dbReference type="GeneID" id="100126824"/>
<dbReference type="KEGG" id="mmu:100126824"/>
<dbReference type="UCSC" id="uc033gwc.1">
    <property type="organism name" value="mouse"/>
</dbReference>
<dbReference type="AGR" id="MGI:3818630"/>
<dbReference type="CTD" id="9997"/>
<dbReference type="MGI" id="MGI:3818630">
    <property type="gene designation" value="Sco2"/>
</dbReference>
<dbReference type="VEuPathDB" id="HostDB:ENSMUSG00000091780"/>
<dbReference type="eggNOG" id="KOG2792">
    <property type="taxonomic scope" value="Eukaryota"/>
</dbReference>
<dbReference type="GeneTree" id="ENSGT00390000004323"/>
<dbReference type="HOGENOM" id="CLU_050131_0_3_1"/>
<dbReference type="InParanoid" id="Q8VCL2"/>
<dbReference type="OMA" id="YYNRMKS"/>
<dbReference type="OrthoDB" id="76676at2759"/>
<dbReference type="PhylomeDB" id="Q8VCL2"/>
<dbReference type="TreeFam" id="TF313752"/>
<dbReference type="Reactome" id="R-MMU-9864848">
    <property type="pathway name" value="Complex IV assembly"/>
</dbReference>
<dbReference type="BioGRID-ORCS" id="100126824">
    <property type="hits" value="10 hits in 47 CRISPR screens"/>
</dbReference>
<dbReference type="PRO" id="PR:Q8VCL2"/>
<dbReference type="Proteomes" id="UP000000589">
    <property type="component" value="Chromosome 15"/>
</dbReference>
<dbReference type="RNAct" id="Q8VCL2">
    <property type="molecule type" value="protein"/>
</dbReference>
<dbReference type="Bgee" id="ENSMUSG00000091780">
    <property type="expression patterns" value="Expressed in yolk sac and 67 other cell types or tissues"/>
</dbReference>
<dbReference type="GO" id="GO:0005743">
    <property type="term" value="C:mitochondrial inner membrane"/>
    <property type="evidence" value="ECO:0000250"/>
    <property type="project" value="UniProtKB"/>
</dbReference>
<dbReference type="GO" id="GO:0005739">
    <property type="term" value="C:mitochondrion"/>
    <property type="evidence" value="ECO:0000314"/>
    <property type="project" value="MGI"/>
</dbReference>
<dbReference type="GO" id="GO:0030016">
    <property type="term" value="C:myofibril"/>
    <property type="evidence" value="ECO:0000266"/>
    <property type="project" value="MGI"/>
</dbReference>
<dbReference type="GO" id="GO:0016531">
    <property type="term" value="F:copper chaperone activity"/>
    <property type="evidence" value="ECO:0007669"/>
    <property type="project" value="InterPro"/>
</dbReference>
<dbReference type="GO" id="GO:0005507">
    <property type="term" value="F:copper ion binding"/>
    <property type="evidence" value="ECO:0007669"/>
    <property type="project" value="InterPro"/>
</dbReference>
<dbReference type="GO" id="GO:0015035">
    <property type="term" value="F:protein-disulfide reductase activity"/>
    <property type="evidence" value="ECO:0000250"/>
    <property type="project" value="UniProtKB"/>
</dbReference>
<dbReference type="GO" id="GO:0055070">
    <property type="term" value="P:copper ion homeostasis"/>
    <property type="evidence" value="ECO:0000315"/>
    <property type="project" value="MGI"/>
</dbReference>
<dbReference type="GO" id="GO:0001654">
    <property type="term" value="P:eye development"/>
    <property type="evidence" value="ECO:0000250"/>
    <property type="project" value="UniProtKB"/>
</dbReference>
<dbReference type="GO" id="GO:0001701">
    <property type="term" value="P:in utero embryonic development"/>
    <property type="evidence" value="ECO:0000315"/>
    <property type="project" value="MGI"/>
</dbReference>
<dbReference type="GO" id="GO:0006878">
    <property type="term" value="P:intracellular copper ion homeostasis"/>
    <property type="evidence" value="ECO:0007669"/>
    <property type="project" value="InterPro"/>
</dbReference>
<dbReference type="GO" id="GO:0033617">
    <property type="term" value="P:mitochondrial cytochrome c oxidase assembly"/>
    <property type="evidence" value="ECO:0000250"/>
    <property type="project" value="UniProtKB"/>
</dbReference>
<dbReference type="GO" id="GO:0003012">
    <property type="term" value="P:muscle system process"/>
    <property type="evidence" value="ECO:0000315"/>
    <property type="project" value="MGI"/>
</dbReference>
<dbReference type="GO" id="GO:0008535">
    <property type="term" value="P:respiratory chain complex IV assembly"/>
    <property type="evidence" value="ECO:0000315"/>
    <property type="project" value="MGI"/>
</dbReference>
<dbReference type="GO" id="GO:0022904">
    <property type="term" value="P:respiratory electron transport chain"/>
    <property type="evidence" value="ECO:0000315"/>
    <property type="project" value="MGI"/>
</dbReference>
<dbReference type="GO" id="GO:0014823">
    <property type="term" value="P:response to activity"/>
    <property type="evidence" value="ECO:0000315"/>
    <property type="project" value="MGI"/>
</dbReference>
<dbReference type="CDD" id="cd02968">
    <property type="entry name" value="SCO"/>
    <property type="match status" value="1"/>
</dbReference>
<dbReference type="FunFam" id="3.40.30.10:FF:000013">
    <property type="entry name" value="Blast:Protein SCO1 homolog, mitochondrial"/>
    <property type="match status" value="1"/>
</dbReference>
<dbReference type="Gene3D" id="3.40.30.10">
    <property type="entry name" value="Glutaredoxin"/>
    <property type="match status" value="1"/>
</dbReference>
<dbReference type="InterPro" id="IPR003782">
    <property type="entry name" value="SCO1/SenC"/>
</dbReference>
<dbReference type="InterPro" id="IPR017276">
    <property type="entry name" value="Synth_of_cyt-c-oxidase_Sco1/2"/>
</dbReference>
<dbReference type="InterPro" id="IPR036249">
    <property type="entry name" value="Thioredoxin-like_sf"/>
</dbReference>
<dbReference type="InterPro" id="IPR013766">
    <property type="entry name" value="Thioredoxin_domain"/>
</dbReference>
<dbReference type="PANTHER" id="PTHR12151">
    <property type="entry name" value="ELECTRON TRANSPORT PROTIN SCO1/SENC FAMILY MEMBER"/>
    <property type="match status" value="1"/>
</dbReference>
<dbReference type="PANTHER" id="PTHR12151:SF2">
    <property type="entry name" value="PROTEIN SCO2 HOMOLOG, MITOCHONDRIAL"/>
    <property type="match status" value="1"/>
</dbReference>
<dbReference type="Pfam" id="PF02630">
    <property type="entry name" value="SCO1-SenC"/>
    <property type="match status" value="1"/>
</dbReference>
<dbReference type="PIRSF" id="PIRSF037736">
    <property type="entry name" value="SCO1"/>
    <property type="match status" value="1"/>
</dbReference>
<dbReference type="SUPFAM" id="SSF52833">
    <property type="entry name" value="Thioredoxin-like"/>
    <property type="match status" value="1"/>
</dbReference>
<dbReference type="PROSITE" id="PS51352">
    <property type="entry name" value="THIOREDOXIN_2"/>
    <property type="match status" value="1"/>
</dbReference>
<protein>
    <recommendedName>
        <fullName>Protein SCO2 homolog, mitochondrial</fullName>
    </recommendedName>
</protein>
<organism>
    <name type="scientific">Mus musculus</name>
    <name type="common">Mouse</name>
    <dbReference type="NCBI Taxonomy" id="10090"/>
    <lineage>
        <taxon>Eukaryota</taxon>
        <taxon>Metazoa</taxon>
        <taxon>Chordata</taxon>
        <taxon>Craniata</taxon>
        <taxon>Vertebrata</taxon>
        <taxon>Euteleostomi</taxon>
        <taxon>Mammalia</taxon>
        <taxon>Eutheria</taxon>
        <taxon>Euarchontoglires</taxon>
        <taxon>Glires</taxon>
        <taxon>Rodentia</taxon>
        <taxon>Myomorpha</taxon>
        <taxon>Muroidea</taxon>
        <taxon>Muridae</taxon>
        <taxon>Murinae</taxon>
        <taxon>Mus</taxon>
        <taxon>Mus</taxon>
    </lineage>
</organism>
<accession>Q8VCL2</accession>
<gene>
    <name type="primary">Sco2</name>
</gene>